<evidence type="ECO:0000250" key="1"/>
<evidence type="ECO:0000305" key="2"/>
<feature type="chain" id="PRO_0000329290" description="Protein-lysine methyltransferase METTL21E">
    <location>
        <begin position="1"/>
        <end position="290"/>
    </location>
</feature>
<feature type="binding site" evidence="1">
    <location>
        <position position="96"/>
    </location>
    <ligand>
        <name>S-adenosyl-L-methionine</name>
        <dbReference type="ChEBI" id="CHEBI:59789"/>
    </ligand>
</feature>
<feature type="binding site" evidence="1">
    <location>
        <begin position="124"/>
        <end position="126"/>
    </location>
    <ligand>
        <name>S-adenosyl-L-methionine</name>
        <dbReference type="ChEBI" id="CHEBI:59789"/>
    </ligand>
</feature>
<feature type="binding site" evidence="1">
    <location>
        <position position="145"/>
    </location>
    <ligand>
        <name>S-adenosyl-L-methionine</name>
        <dbReference type="ChEBI" id="CHEBI:59789"/>
    </ligand>
</feature>
<feature type="binding site" evidence="1">
    <location>
        <position position="176"/>
    </location>
    <ligand>
        <name>S-adenosyl-L-methionine</name>
        <dbReference type="ChEBI" id="CHEBI:59789"/>
    </ligand>
</feature>
<feature type="binding site" evidence="1">
    <location>
        <position position="197"/>
    </location>
    <ligand>
        <name>S-adenosyl-L-methionine</name>
        <dbReference type="ChEBI" id="CHEBI:59789"/>
    </ligand>
</feature>
<feature type="sequence conflict" description="In Ref. 2; AAI49819." evidence="2" ref="2">
    <original>R</original>
    <variation>G</variation>
    <location>
        <position position="45"/>
    </location>
</feature>
<reference key="1">
    <citation type="journal article" date="2005" name="BMC Genomics">
        <title>Characterization of 954 bovine full-CDS cDNA sequences.</title>
        <authorList>
            <person name="Harhay G.P."/>
            <person name="Sonstegard T.S."/>
            <person name="Keele J.W."/>
            <person name="Heaton M.P."/>
            <person name="Clawson M.L."/>
            <person name="Snelling W.M."/>
            <person name="Wiedmann R.T."/>
            <person name="Van Tassell C.P."/>
            <person name="Smith T.P.L."/>
        </authorList>
    </citation>
    <scope>NUCLEOTIDE SEQUENCE [LARGE SCALE MRNA]</scope>
</reference>
<reference key="2">
    <citation type="submission" date="2007-07" db="EMBL/GenBank/DDBJ databases">
        <authorList>
            <consortium name="NIH - Mammalian Gene Collection (MGC) project"/>
        </authorList>
    </citation>
    <scope>NUCLEOTIDE SEQUENCE [LARGE SCALE MRNA]</scope>
    <source>
        <strain>Hereford</strain>
        <tissue>Fetal muscle</tissue>
    </source>
</reference>
<organism>
    <name type="scientific">Bos taurus</name>
    <name type="common">Bovine</name>
    <dbReference type="NCBI Taxonomy" id="9913"/>
    <lineage>
        <taxon>Eukaryota</taxon>
        <taxon>Metazoa</taxon>
        <taxon>Chordata</taxon>
        <taxon>Craniata</taxon>
        <taxon>Vertebrata</taxon>
        <taxon>Euteleostomi</taxon>
        <taxon>Mammalia</taxon>
        <taxon>Eutheria</taxon>
        <taxon>Laurasiatheria</taxon>
        <taxon>Artiodactyla</taxon>
        <taxon>Ruminantia</taxon>
        <taxon>Pecora</taxon>
        <taxon>Bovidae</taxon>
        <taxon>Bovinae</taxon>
        <taxon>Bos</taxon>
    </lineage>
</organism>
<protein>
    <recommendedName>
        <fullName>Protein-lysine methyltransferase METTL21E</fullName>
        <ecNumber>2.1.1.-</ecNumber>
    </recommendedName>
    <alternativeName>
        <fullName>Methyltransferase-like protein 21E</fullName>
    </alternativeName>
</protein>
<keyword id="KW-0489">Methyltransferase</keyword>
<keyword id="KW-1185">Reference proteome</keyword>
<keyword id="KW-0949">S-adenosyl-L-methionine</keyword>
<keyword id="KW-0808">Transferase</keyword>
<dbReference type="EC" id="2.1.1.-"/>
<dbReference type="EMBL" id="BT021670">
    <property type="protein sequence ID" value="AAX46517.1"/>
    <property type="molecule type" value="mRNA"/>
</dbReference>
<dbReference type="EMBL" id="BC149818">
    <property type="protein sequence ID" value="AAI49819.1"/>
    <property type="molecule type" value="mRNA"/>
</dbReference>
<dbReference type="RefSeq" id="NP_001014922.1">
    <property type="nucleotide sequence ID" value="NM_001014922.1"/>
</dbReference>
<dbReference type="SMR" id="Q58DC7"/>
<dbReference type="FunCoup" id="Q58DC7">
    <property type="interactions" value="197"/>
</dbReference>
<dbReference type="STRING" id="9913.ENSBTAP00000001770"/>
<dbReference type="PaxDb" id="9913-ENSBTAP00000001770"/>
<dbReference type="GeneID" id="513822"/>
<dbReference type="KEGG" id="bta:513822"/>
<dbReference type="CTD" id="403183"/>
<dbReference type="eggNOG" id="KOG2793">
    <property type="taxonomic scope" value="Eukaryota"/>
</dbReference>
<dbReference type="HOGENOM" id="CLU_055721_0_0_1"/>
<dbReference type="InParanoid" id="Q58DC7"/>
<dbReference type="OrthoDB" id="413520at2759"/>
<dbReference type="TreeFam" id="TF354267"/>
<dbReference type="Proteomes" id="UP000009136">
    <property type="component" value="Unplaced"/>
</dbReference>
<dbReference type="GO" id="GO:0008276">
    <property type="term" value="F:protein methyltransferase activity"/>
    <property type="evidence" value="ECO:0000318"/>
    <property type="project" value="GO_Central"/>
</dbReference>
<dbReference type="GO" id="GO:0032259">
    <property type="term" value="P:methylation"/>
    <property type="evidence" value="ECO:0007669"/>
    <property type="project" value="UniProtKB-KW"/>
</dbReference>
<dbReference type="CDD" id="cd02440">
    <property type="entry name" value="AdoMet_MTases"/>
    <property type="match status" value="1"/>
</dbReference>
<dbReference type="Gene3D" id="3.40.50.150">
    <property type="entry name" value="Vaccinia Virus protein VP39"/>
    <property type="match status" value="1"/>
</dbReference>
<dbReference type="InterPro" id="IPR019410">
    <property type="entry name" value="Methyltransf_16"/>
</dbReference>
<dbReference type="InterPro" id="IPR029063">
    <property type="entry name" value="SAM-dependent_MTases_sf"/>
</dbReference>
<dbReference type="PANTHER" id="PTHR14614">
    <property type="entry name" value="HEPATOCELLULAR CARCINOMA-ASSOCIATED ANTIGEN"/>
    <property type="match status" value="1"/>
</dbReference>
<dbReference type="PANTHER" id="PTHR14614:SF1">
    <property type="entry name" value="METHYLTRANSFERASE-LIKE PROTEIN 21E PSEUDOGENE-RELATED"/>
    <property type="match status" value="1"/>
</dbReference>
<dbReference type="Pfam" id="PF10294">
    <property type="entry name" value="Methyltransf_16"/>
    <property type="match status" value="1"/>
</dbReference>
<dbReference type="SUPFAM" id="SSF53335">
    <property type="entry name" value="S-adenosyl-L-methionine-dependent methyltransferases"/>
    <property type="match status" value="1"/>
</dbReference>
<gene>
    <name type="primary">METTL21E</name>
</gene>
<comment type="function">
    <text evidence="1">Protein-lysine methyltransferase.</text>
</comment>
<comment type="similarity">
    <text evidence="2">Belongs to the methyltransferase superfamily. METTL21 family.</text>
</comment>
<sequence>MILFNLLETQLTRVHSFQEMIKKASVYRHPLANHLMDPEVQKESREDGDDRTVVAEIMRRCFVPAFVTTIPWEGFHFAGHEIRINEATDCYGAVVWPSALVLCYFLETNVKQYNLVDKNVIEIGAGTGLVSIVASLLGAHVTATDLPELLGNLQYNISRNTKTKAKHLPQVKELSWGVALDKNFPRASINFDYILAADVVYAHPFLEELLVTFDHLCKETTVILWVMKFRLEKENKFVDRFEQLFDLEEISSFPSLNIKLYKAMKKNQKSACYPQRRMWKAKPISGRLLL</sequence>
<accession>Q58DC7</accession>
<accession>A6QQG3</accession>
<proteinExistence type="evidence at transcript level"/>
<name>MT21E_BOVIN</name>